<keyword id="KW-0067">ATP-binding</keyword>
<keyword id="KW-1003">Cell membrane</keyword>
<keyword id="KW-0325">Glycoprotein</keyword>
<keyword id="KW-0418">Kinase</keyword>
<keyword id="KW-0430">Lectin</keyword>
<keyword id="KW-0472">Membrane</keyword>
<keyword id="KW-0547">Nucleotide-binding</keyword>
<keyword id="KW-0611">Plant defense</keyword>
<keyword id="KW-0675">Receptor</keyword>
<keyword id="KW-1185">Reference proteome</keyword>
<keyword id="KW-0723">Serine/threonine-protein kinase</keyword>
<keyword id="KW-0732">Signal</keyword>
<keyword id="KW-0808">Transferase</keyword>
<keyword id="KW-0812">Transmembrane</keyword>
<keyword id="KW-1133">Transmembrane helix</keyword>
<organism>
    <name type="scientific">Arabidopsis thaliana</name>
    <name type="common">Mouse-ear cress</name>
    <dbReference type="NCBI Taxonomy" id="3702"/>
    <lineage>
        <taxon>Eukaryota</taxon>
        <taxon>Viridiplantae</taxon>
        <taxon>Streptophyta</taxon>
        <taxon>Embryophyta</taxon>
        <taxon>Tracheophyta</taxon>
        <taxon>Spermatophyta</taxon>
        <taxon>Magnoliopsida</taxon>
        <taxon>eudicotyledons</taxon>
        <taxon>Gunneridae</taxon>
        <taxon>Pentapetalae</taxon>
        <taxon>rosids</taxon>
        <taxon>malvids</taxon>
        <taxon>Brassicales</taxon>
        <taxon>Brassicaceae</taxon>
        <taxon>Camelineae</taxon>
        <taxon>Arabidopsis</taxon>
    </lineage>
</organism>
<dbReference type="EC" id="2.7.11.1" evidence="3"/>
<dbReference type="EMBL" id="AB026632">
    <property type="protein sequence ID" value="BAA97508.1"/>
    <property type="molecule type" value="Genomic_DNA"/>
</dbReference>
<dbReference type="EMBL" id="CP002688">
    <property type="protein sequence ID" value="AED97302.1"/>
    <property type="molecule type" value="Genomic_DNA"/>
</dbReference>
<dbReference type="EMBL" id="BT010577">
    <property type="protein sequence ID" value="AAQ65200.1"/>
    <property type="molecule type" value="mRNA"/>
</dbReference>
<dbReference type="EMBL" id="AK221799">
    <property type="protein sequence ID" value="BAD93956.1"/>
    <property type="molecule type" value="mRNA"/>
</dbReference>
<dbReference type="RefSeq" id="NP_200836.1">
    <property type="nucleotide sequence ID" value="NM_125421.2"/>
</dbReference>
<dbReference type="SMR" id="Q9LSR9"/>
<dbReference type="FunCoup" id="Q9LSR9">
    <property type="interactions" value="74"/>
</dbReference>
<dbReference type="STRING" id="3702.Q9LSR9"/>
<dbReference type="GlyCosmos" id="Q9LSR9">
    <property type="glycosylation" value="5 sites, No reported glycans"/>
</dbReference>
<dbReference type="GlyGen" id="Q9LSR9">
    <property type="glycosylation" value="5 sites"/>
</dbReference>
<dbReference type="PaxDb" id="3702-AT5G60280.1"/>
<dbReference type="ProteomicsDB" id="238612"/>
<dbReference type="EnsemblPlants" id="AT5G60280.1">
    <property type="protein sequence ID" value="AT5G60280.1"/>
    <property type="gene ID" value="AT5G60280"/>
</dbReference>
<dbReference type="GeneID" id="836150"/>
<dbReference type="Gramene" id="AT5G60280.1">
    <property type="protein sequence ID" value="AT5G60280.1"/>
    <property type="gene ID" value="AT5G60280"/>
</dbReference>
<dbReference type="KEGG" id="ath:AT5G60280"/>
<dbReference type="Araport" id="AT5G60280"/>
<dbReference type="TAIR" id="AT5G60280">
    <property type="gene designation" value="LECRK-I.8"/>
</dbReference>
<dbReference type="eggNOG" id="ENOG502QSJ4">
    <property type="taxonomic scope" value="Eukaryota"/>
</dbReference>
<dbReference type="HOGENOM" id="CLU_000288_62_3_1"/>
<dbReference type="InParanoid" id="Q9LSR9"/>
<dbReference type="OMA" id="VCAMVRK"/>
<dbReference type="PhylomeDB" id="Q9LSR9"/>
<dbReference type="PRO" id="PR:Q9LSR9"/>
<dbReference type="Proteomes" id="UP000006548">
    <property type="component" value="Chromosome 5"/>
</dbReference>
<dbReference type="ExpressionAtlas" id="Q9LSR9">
    <property type="expression patterns" value="baseline and differential"/>
</dbReference>
<dbReference type="GO" id="GO:0005886">
    <property type="term" value="C:plasma membrane"/>
    <property type="evidence" value="ECO:0000314"/>
    <property type="project" value="TAIR"/>
</dbReference>
<dbReference type="GO" id="GO:0005524">
    <property type="term" value="F:ATP binding"/>
    <property type="evidence" value="ECO:0007669"/>
    <property type="project" value="UniProtKB-KW"/>
</dbReference>
<dbReference type="GO" id="GO:0030246">
    <property type="term" value="F:carbohydrate binding"/>
    <property type="evidence" value="ECO:0007669"/>
    <property type="project" value="UniProtKB-KW"/>
</dbReference>
<dbReference type="GO" id="GO:0016301">
    <property type="term" value="F:kinase activity"/>
    <property type="evidence" value="ECO:0000314"/>
    <property type="project" value="TAIR"/>
</dbReference>
<dbReference type="GO" id="GO:0070403">
    <property type="term" value="F:NAD+ binding"/>
    <property type="evidence" value="ECO:0000314"/>
    <property type="project" value="TAIR"/>
</dbReference>
<dbReference type="GO" id="GO:0106310">
    <property type="term" value="F:protein serine kinase activity"/>
    <property type="evidence" value="ECO:0007669"/>
    <property type="project" value="RHEA"/>
</dbReference>
<dbReference type="GO" id="GO:0004674">
    <property type="term" value="F:protein serine/threonine kinase activity"/>
    <property type="evidence" value="ECO:0007669"/>
    <property type="project" value="UniProtKB-KW"/>
</dbReference>
<dbReference type="GO" id="GO:0050832">
    <property type="term" value="P:defense response to fungus"/>
    <property type="evidence" value="ECO:0000315"/>
    <property type="project" value="UniProtKB"/>
</dbReference>
<dbReference type="GO" id="GO:0046777">
    <property type="term" value="P:protein autophosphorylation"/>
    <property type="evidence" value="ECO:0000314"/>
    <property type="project" value="TAIR"/>
</dbReference>
<dbReference type="CDD" id="cd06899">
    <property type="entry name" value="lectin_legume_LecRK_Arcelin_ConA"/>
    <property type="match status" value="1"/>
</dbReference>
<dbReference type="FunFam" id="3.30.200.20:FF:000451">
    <property type="entry name" value="L-type lectin-domain containing receptor kinase I.9"/>
    <property type="match status" value="1"/>
</dbReference>
<dbReference type="FunFam" id="1.10.510.10:FF:000108">
    <property type="entry name" value="L-type lectin-domain containing receptor kinase S.4"/>
    <property type="match status" value="1"/>
</dbReference>
<dbReference type="FunFam" id="2.60.120.200:FF:000096">
    <property type="entry name" value="L-type lectin-domain containing receptor kinase V.9"/>
    <property type="match status" value="1"/>
</dbReference>
<dbReference type="Gene3D" id="2.60.120.200">
    <property type="match status" value="1"/>
</dbReference>
<dbReference type="Gene3D" id="3.30.200.20">
    <property type="entry name" value="Phosphorylase Kinase, domain 1"/>
    <property type="match status" value="1"/>
</dbReference>
<dbReference type="Gene3D" id="1.10.510.10">
    <property type="entry name" value="Transferase(Phosphotransferase) domain 1"/>
    <property type="match status" value="1"/>
</dbReference>
<dbReference type="InterPro" id="IPR013320">
    <property type="entry name" value="ConA-like_dom_sf"/>
</dbReference>
<dbReference type="InterPro" id="IPR011009">
    <property type="entry name" value="Kinase-like_dom_sf"/>
</dbReference>
<dbReference type="InterPro" id="IPR050528">
    <property type="entry name" value="L-type_Lectin-RKs"/>
</dbReference>
<dbReference type="InterPro" id="IPR001220">
    <property type="entry name" value="Legume_lectin_dom"/>
</dbReference>
<dbReference type="InterPro" id="IPR000719">
    <property type="entry name" value="Prot_kinase_dom"/>
</dbReference>
<dbReference type="InterPro" id="IPR017441">
    <property type="entry name" value="Protein_kinase_ATP_BS"/>
</dbReference>
<dbReference type="InterPro" id="IPR008271">
    <property type="entry name" value="Ser/Thr_kinase_AS"/>
</dbReference>
<dbReference type="PANTHER" id="PTHR27007">
    <property type="match status" value="1"/>
</dbReference>
<dbReference type="Pfam" id="PF00139">
    <property type="entry name" value="Lectin_legB"/>
    <property type="match status" value="1"/>
</dbReference>
<dbReference type="Pfam" id="PF00069">
    <property type="entry name" value="Pkinase"/>
    <property type="match status" value="1"/>
</dbReference>
<dbReference type="SMART" id="SM00220">
    <property type="entry name" value="S_TKc"/>
    <property type="match status" value="1"/>
</dbReference>
<dbReference type="SUPFAM" id="SSF49899">
    <property type="entry name" value="Concanavalin A-like lectins/glucanases"/>
    <property type="match status" value="1"/>
</dbReference>
<dbReference type="SUPFAM" id="SSF56112">
    <property type="entry name" value="Protein kinase-like (PK-like)"/>
    <property type="match status" value="1"/>
</dbReference>
<dbReference type="PROSITE" id="PS00107">
    <property type="entry name" value="PROTEIN_KINASE_ATP"/>
    <property type="match status" value="1"/>
</dbReference>
<dbReference type="PROSITE" id="PS50011">
    <property type="entry name" value="PROTEIN_KINASE_DOM"/>
    <property type="match status" value="1"/>
</dbReference>
<dbReference type="PROSITE" id="PS00108">
    <property type="entry name" value="PROTEIN_KINASE_ST"/>
    <property type="match status" value="1"/>
</dbReference>
<reference key="1">
    <citation type="submission" date="1999-04" db="EMBL/GenBank/DDBJ databases">
        <title>Structural analysis of Arabidopsis thaliana chromosome 5. XI.</title>
        <authorList>
            <person name="Kaneko T."/>
            <person name="Katoh T."/>
            <person name="Asamizu E."/>
            <person name="Sato S."/>
            <person name="Nakamura Y."/>
            <person name="Kotani H."/>
            <person name="Tabata S."/>
        </authorList>
    </citation>
    <scope>NUCLEOTIDE SEQUENCE [LARGE SCALE GENOMIC DNA]</scope>
    <source>
        <strain>cv. Columbia</strain>
    </source>
</reference>
<reference key="2">
    <citation type="journal article" date="2017" name="Plant J.">
        <title>Araport11: a complete reannotation of the Arabidopsis thaliana reference genome.</title>
        <authorList>
            <person name="Cheng C.Y."/>
            <person name="Krishnakumar V."/>
            <person name="Chan A.P."/>
            <person name="Thibaud-Nissen F."/>
            <person name="Schobel S."/>
            <person name="Town C.D."/>
        </authorList>
    </citation>
    <scope>GENOME REANNOTATION</scope>
    <source>
        <strain>cv. Columbia</strain>
    </source>
</reference>
<reference key="3">
    <citation type="journal article" date="2003" name="Science">
        <title>Empirical analysis of transcriptional activity in the Arabidopsis genome.</title>
        <authorList>
            <person name="Yamada K."/>
            <person name="Lim J."/>
            <person name="Dale J.M."/>
            <person name="Chen H."/>
            <person name="Shinn P."/>
            <person name="Palm C.J."/>
            <person name="Southwick A.M."/>
            <person name="Wu H.C."/>
            <person name="Kim C.J."/>
            <person name="Nguyen M."/>
            <person name="Pham P.K."/>
            <person name="Cheuk R.F."/>
            <person name="Karlin-Newmann G."/>
            <person name="Liu S.X."/>
            <person name="Lam B."/>
            <person name="Sakano H."/>
            <person name="Wu T."/>
            <person name="Yu G."/>
            <person name="Miranda M."/>
            <person name="Quach H.L."/>
            <person name="Tripp M."/>
            <person name="Chang C.H."/>
            <person name="Lee J.M."/>
            <person name="Toriumi M.J."/>
            <person name="Chan M.M."/>
            <person name="Tang C.C."/>
            <person name="Onodera C.S."/>
            <person name="Deng J.M."/>
            <person name="Akiyama K."/>
            <person name="Ansari Y."/>
            <person name="Arakawa T."/>
            <person name="Banh J."/>
            <person name="Banno F."/>
            <person name="Bowser L."/>
            <person name="Brooks S.Y."/>
            <person name="Carninci P."/>
            <person name="Chao Q."/>
            <person name="Choy N."/>
            <person name="Enju A."/>
            <person name="Goldsmith A.D."/>
            <person name="Gurjal M."/>
            <person name="Hansen N.F."/>
            <person name="Hayashizaki Y."/>
            <person name="Johnson-Hopson C."/>
            <person name="Hsuan V.W."/>
            <person name="Iida K."/>
            <person name="Karnes M."/>
            <person name="Khan S."/>
            <person name="Koesema E."/>
            <person name="Ishida J."/>
            <person name="Jiang P.X."/>
            <person name="Jones T."/>
            <person name="Kawai J."/>
            <person name="Kamiya A."/>
            <person name="Meyers C."/>
            <person name="Nakajima M."/>
            <person name="Narusaka M."/>
            <person name="Seki M."/>
            <person name="Sakurai T."/>
            <person name="Satou M."/>
            <person name="Tamse R."/>
            <person name="Vaysberg M."/>
            <person name="Wallender E.K."/>
            <person name="Wong C."/>
            <person name="Yamamura Y."/>
            <person name="Yuan S."/>
            <person name="Shinozaki K."/>
            <person name="Davis R.W."/>
            <person name="Theologis A."/>
            <person name="Ecker J.R."/>
        </authorList>
    </citation>
    <scope>NUCLEOTIDE SEQUENCE [LARGE SCALE MRNA]</scope>
    <source>
        <strain>cv. Columbia</strain>
    </source>
</reference>
<reference key="4">
    <citation type="submission" date="2005-03" db="EMBL/GenBank/DDBJ databases">
        <title>Large-scale analysis of RIKEN Arabidopsis full-length (RAFL) cDNAs.</title>
        <authorList>
            <person name="Totoki Y."/>
            <person name="Seki M."/>
            <person name="Ishida J."/>
            <person name="Nakajima M."/>
            <person name="Enju A."/>
            <person name="Kamiya A."/>
            <person name="Narusaka M."/>
            <person name="Shin-i T."/>
            <person name="Nakagawa M."/>
            <person name="Sakamoto N."/>
            <person name="Oishi K."/>
            <person name="Kohara Y."/>
            <person name="Kobayashi M."/>
            <person name="Toyoda A."/>
            <person name="Sakaki Y."/>
            <person name="Sakurai T."/>
            <person name="Iida K."/>
            <person name="Akiyama K."/>
            <person name="Satou M."/>
            <person name="Toyoda T."/>
            <person name="Konagaya A."/>
            <person name="Carninci P."/>
            <person name="Kawai J."/>
            <person name="Hayashizaki Y."/>
            <person name="Shinozaki K."/>
        </authorList>
    </citation>
    <scope>NUCLEOTIDE SEQUENCE [LARGE SCALE MRNA]</scope>
    <source>
        <strain>cv. Columbia</strain>
    </source>
</reference>
<reference key="5">
    <citation type="journal article" date="2002" name="Crit. Rev. Plant Sci.">
        <title>Lectin receptor kinases in plants.</title>
        <authorList>
            <person name="Barre A."/>
            <person name="Herve C."/>
            <person name="Lescure B."/>
            <person name="Rouge P."/>
        </authorList>
    </citation>
    <scope>GENE FAMILY</scope>
</reference>
<reference key="6">
    <citation type="journal article" date="2009" name="J. Exp. Bot.">
        <title>Arabidopsis L-type lectin receptor kinases: phylogeny, classification, and expression profiles.</title>
        <authorList>
            <person name="Bouwmeester K."/>
            <person name="Govers F."/>
        </authorList>
    </citation>
    <scope>GENE FAMILY</scope>
    <scope>NOMENCLATURE</scope>
</reference>
<reference key="7">
    <citation type="journal article" date="2014" name="Mol. Plant Microbe Interact.">
        <title>Phenotypic analyses of Arabidopsis T-DNA insertion lines and expression profiling reveal that multiple L-type lectin receptor kinases are involved in plant immunity.</title>
        <authorList>
            <person name="Wang Y."/>
            <person name="Bouwmeester K."/>
            <person name="Beseh P."/>
            <person name="Shan W."/>
            <person name="Govers F."/>
        </authorList>
    </citation>
    <scope>FUNCTION</scope>
    <scope>DISRUPTION PHENOTYPE</scope>
    <source>
        <strain>cv. Columbia</strain>
    </source>
</reference>
<evidence type="ECO:0000250" key="1">
    <source>
        <dbReference type="UniProtKB" id="Q9LSR8"/>
    </source>
</evidence>
<evidence type="ECO:0000255" key="2"/>
<evidence type="ECO:0000255" key="3">
    <source>
        <dbReference type="PROSITE-ProRule" id="PRU00159"/>
    </source>
</evidence>
<evidence type="ECO:0000269" key="4">
    <source>
    </source>
</evidence>
<evidence type="ECO:0000303" key="5">
    <source>
    </source>
</evidence>
<evidence type="ECO:0000305" key="6"/>
<evidence type="ECO:0000312" key="7">
    <source>
        <dbReference type="Araport" id="AT5G60280"/>
    </source>
</evidence>
<evidence type="ECO:0000312" key="8">
    <source>
        <dbReference type="EMBL" id="BAA97508.1"/>
    </source>
</evidence>
<comment type="function">
    <text evidence="4">Involved in resistance response to the pathogenic fungus Alternaria brassicicola.</text>
</comment>
<comment type="catalytic activity">
    <reaction evidence="3">
        <text>L-seryl-[protein] + ATP = O-phospho-L-seryl-[protein] + ADP + H(+)</text>
        <dbReference type="Rhea" id="RHEA:17989"/>
        <dbReference type="Rhea" id="RHEA-COMP:9863"/>
        <dbReference type="Rhea" id="RHEA-COMP:11604"/>
        <dbReference type="ChEBI" id="CHEBI:15378"/>
        <dbReference type="ChEBI" id="CHEBI:29999"/>
        <dbReference type="ChEBI" id="CHEBI:30616"/>
        <dbReference type="ChEBI" id="CHEBI:83421"/>
        <dbReference type="ChEBI" id="CHEBI:456216"/>
        <dbReference type="EC" id="2.7.11.1"/>
    </reaction>
</comment>
<comment type="catalytic activity">
    <reaction evidence="3">
        <text>L-threonyl-[protein] + ATP = O-phospho-L-threonyl-[protein] + ADP + H(+)</text>
        <dbReference type="Rhea" id="RHEA:46608"/>
        <dbReference type="Rhea" id="RHEA-COMP:11060"/>
        <dbReference type="Rhea" id="RHEA-COMP:11605"/>
        <dbReference type="ChEBI" id="CHEBI:15378"/>
        <dbReference type="ChEBI" id="CHEBI:30013"/>
        <dbReference type="ChEBI" id="CHEBI:30616"/>
        <dbReference type="ChEBI" id="CHEBI:61977"/>
        <dbReference type="ChEBI" id="CHEBI:456216"/>
        <dbReference type="EC" id="2.7.11.1"/>
    </reaction>
</comment>
<comment type="subcellular location">
    <subcellularLocation>
        <location evidence="1">Cell membrane</location>
        <topology evidence="2">Single-pass type I membrane protein</topology>
    </subcellularLocation>
</comment>
<comment type="disruption phenotype">
    <text evidence="4">Increased susceptibility to the fungus Alternaria brassicicola.</text>
</comment>
<comment type="similarity">
    <text evidence="6">In the C-terminal section; belongs to the protein kinase superfamily. Ser/Thr protein kinase family.</text>
</comment>
<comment type="similarity">
    <text evidence="6">In the N-terminal section; belongs to the leguminous lectin family.</text>
</comment>
<feature type="signal peptide" evidence="2">
    <location>
        <begin position="1"/>
        <end position="23"/>
    </location>
</feature>
<feature type="chain" id="PRO_0000403077" description="L-type lectin-domain containing receptor kinase I.8">
    <location>
        <begin position="24"/>
        <end position="657"/>
    </location>
</feature>
<feature type="topological domain" description="Extracellular" evidence="2">
    <location>
        <begin position="24"/>
        <end position="282"/>
    </location>
</feature>
<feature type="transmembrane region" description="Helical" evidence="2">
    <location>
        <begin position="283"/>
        <end position="303"/>
    </location>
</feature>
<feature type="topological domain" description="Cytoplasmic" evidence="2">
    <location>
        <begin position="304"/>
        <end position="657"/>
    </location>
</feature>
<feature type="domain" description="Protein kinase" evidence="3">
    <location>
        <begin position="339"/>
        <end position="611"/>
    </location>
</feature>
<feature type="region of interest" description="Legume-lectin like" evidence="2">
    <location>
        <begin position="25"/>
        <end position="257"/>
    </location>
</feature>
<feature type="active site" description="Proton acceptor" evidence="3">
    <location>
        <position position="462"/>
    </location>
</feature>
<feature type="binding site" evidence="3">
    <location>
        <begin position="345"/>
        <end position="353"/>
    </location>
    <ligand>
        <name>ATP</name>
        <dbReference type="ChEBI" id="CHEBI:30616"/>
    </ligand>
</feature>
<feature type="binding site" evidence="3">
    <location>
        <position position="366"/>
    </location>
    <ligand>
        <name>ATP</name>
        <dbReference type="ChEBI" id="CHEBI:30616"/>
    </ligand>
</feature>
<feature type="glycosylation site" description="N-linked (GlcNAc...) asparagine" evidence="2">
    <location>
        <position position="74"/>
    </location>
</feature>
<feature type="glycosylation site" description="N-linked (GlcNAc...) asparagine" evidence="2">
    <location>
        <position position="124"/>
    </location>
</feature>
<feature type="glycosylation site" description="N-linked (GlcNAc...) asparagine" evidence="2">
    <location>
        <position position="181"/>
    </location>
</feature>
<feature type="glycosylation site" description="N-linked (GlcNAc...) asparagine" evidence="2">
    <location>
        <position position="204"/>
    </location>
</feature>
<feature type="glycosylation site" description="N-linked (GlcNAc...) asparagine" evidence="2">
    <location>
        <position position="225"/>
    </location>
</feature>
<protein>
    <recommendedName>
        <fullName evidence="5">L-type lectin-domain containing receptor kinase I.8</fullName>
        <shortName evidence="5">LecRK-I.8</shortName>
        <ecNumber evidence="3">2.7.11.1</ecNumber>
    </recommendedName>
</protein>
<name>LRK18_ARATH</name>
<accession>Q9LSR9</accession>
<sequence>MAPGLDLIWMVISFLLLIHLSSQQETGFSFNGFRQGDLHVDGVAQILPGGLLRLTDTSEQKKGHAFFRQPLVFNSSEPLSFSTHFVCAMVRKPGVTGGNGIAFFLSPSMDLTNADATQYLGLFNTTTNRSPSSHIFAIELDTVQSAEFDDIDNNHVGIDVNSLTSVESAPASYFSDKKGLNKSISLLSGDSIQVWVDFDGTVLNVSLAPLGIRKPSQSLISRSMNLSEVIQDRMFVGFSAATGQLANNHYILGWSFSRSKASLQSLDISKLPQVPHPKMKTSLLLILLLIVLGIILLVLLVGAYLYRRNKYAEVREEWEKEYGPHRYSYKSLYKATKGFHKDGFLGKGGFGEVYKGTLPQEDIAVKRFSHHGERGMKQFVAEIASMGCLDHRNLVPLFGYCRRKGEFLLVSKYMPNGSLDQFLFHNREPSLTWSKRLGILKGIASALKYLHTEATQVVLHRDIKASNVMLDTDFTGKLGDFGMARFHDHGANPTTTGAVGTVGYMGPELTSMGASTKTDVYAFGALILEVTCGRRPVEPNLPIEKQLLVKWVCDCWKRKDLISARDPKLSGELIPQIEMVLKLGLLCTNLVPESRPDMVKVVQYLDRQVSLPDFSPDSPGIGIVTPVLVGGSSTVISNISSPVTEFITHSIQYGIGR</sequence>
<gene>
    <name evidence="5" type="primary">LECRK18</name>
    <name evidence="7" type="ordered locus">At5g60280</name>
    <name evidence="8" type="ORF">F15L12.12</name>
</gene>
<proteinExistence type="evidence at transcript level"/>